<proteinExistence type="inferred from homology"/>
<evidence type="ECO:0000255" key="1">
    <source>
        <dbReference type="HAMAP-Rule" id="MF_01092"/>
    </source>
</evidence>
<keyword id="KW-0131">Cell cycle</keyword>
<keyword id="KW-0132">Cell division</keyword>
<keyword id="KW-0963">Cytoplasm</keyword>
<keyword id="KW-0717">Septation</keyword>
<protein>
    <recommendedName>
        <fullName evidence="1">Cell division protein ZapD</fullName>
    </recommendedName>
    <alternativeName>
        <fullName evidence="1">Z ring-associated protein D</fullName>
    </alternativeName>
</protein>
<feature type="chain" id="PRO_1000064924" description="Cell division protein ZapD">
    <location>
        <begin position="1"/>
        <end position="247"/>
    </location>
</feature>
<organism>
    <name type="scientific">Shigella boydii serotype 4 (strain Sb227)</name>
    <dbReference type="NCBI Taxonomy" id="300268"/>
    <lineage>
        <taxon>Bacteria</taxon>
        <taxon>Pseudomonadati</taxon>
        <taxon>Pseudomonadota</taxon>
        <taxon>Gammaproteobacteria</taxon>
        <taxon>Enterobacterales</taxon>
        <taxon>Enterobacteriaceae</taxon>
        <taxon>Shigella</taxon>
    </lineage>
</organism>
<dbReference type="EMBL" id="CP000036">
    <property type="protein sequence ID" value="ABB64825.1"/>
    <property type="molecule type" value="Genomic_DNA"/>
</dbReference>
<dbReference type="RefSeq" id="WP_001194732.1">
    <property type="nucleotide sequence ID" value="NC_007613.1"/>
</dbReference>
<dbReference type="SMR" id="Q326D3"/>
<dbReference type="KEGG" id="sbo:SBO_0090"/>
<dbReference type="HOGENOM" id="CLU_076303_0_0_6"/>
<dbReference type="Proteomes" id="UP000007067">
    <property type="component" value="Chromosome"/>
</dbReference>
<dbReference type="GO" id="GO:0032153">
    <property type="term" value="C:cell division site"/>
    <property type="evidence" value="ECO:0007669"/>
    <property type="project" value="TreeGrafter"/>
</dbReference>
<dbReference type="GO" id="GO:0005737">
    <property type="term" value="C:cytoplasm"/>
    <property type="evidence" value="ECO:0007669"/>
    <property type="project" value="UniProtKB-SubCell"/>
</dbReference>
<dbReference type="GO" id="GO:0000917">
    <property type="term" value="P:division septum assembly"/>
    <property type="evidence" value="ECO:0007669"/>
    <property type="project" value="UniProtKB-KW"/>
</dbReference>
<dbReference type="GO" id="GO:0043093">
    <property type="term" value="P:FtsZ-dependent cytokinesis"/>
    <property type="evidence" value="ECO:0007669"/>
    <property type="project" value="UniProtKB-UniRule"/>
</dbReference>
<dbReference type="FunFam" id="1.10.3900.10:FF:000001">
    <property type="entry name" value="Cell division protein ZapD"/>
    <property type="match status" value="1"/>
</dbReference>
<dbReference type="FunFam" id="2.60.440.10:FF:000001">
    <property type="entry name" value="Cell division protein ZapD"/>
    <property type="match status" value="1"/>
</dbReference>
<dbReference type="Gene3D" id="1.10.3900.10">
    <property type="entry name" value="YacF-like"/>
    <property type="match status" value="1"/>
</dbReference>
<dbReference type="Gene3D" id="2.60.440.10">
    <property type="entry name" value="YacF-like domains"/>
    <property type="match status" value="1"/>
</dbReference>
<dbReference type="HAMAP" id="MF_01092">
    <property type="entry name" value="ZapD"/>
    <property type="match status" value="1"/>
</dbReference>
<dbReference type="InterPro" id="IPR009777">
    <property type="entry name" value="ZapD"/>
</dbReference>
<dbReference type="InterPro" id="IPR027462">
    <property type="entry name" value="ZapD_C"/>
</dbReference>
<dbReference type="InterPro" id="IPR036268">
    <property type="entry name" value="ZapD_sf"/>
</dbReference>
<dbReference type="NCBIfam" id="NF003653">
    <property type="entry name" value="PRK05287.1-1"/>
    <property type="match status" value="1"/>
</dbReference>
<dbReference type="NCBIfam" id="NF003655">
    <property type="entry name" value="PRK05287.1-3"/>
    <property type="match status" value="1"/>
</dbReference>
<dbReference type="PANTHER" id="PTHR39455">
    <property type="entry name" value="CELL DIVISION PROTEIN ZAPD"/>
    <property type="match status" value="1"/>
</dbReference>
<dbReference type="PANTHER" id="PTHR39455:SF1">
    <property type="entry name" value="CELL DIVISION PROTEIN ZAPD"/>
    <property type="match status" value="1"/>
</dbReference>
<dbReference type="Pfam" id="PF07072">
    <property type="entry name" value="ZapD"/>
    <property type="match status" value="1"/>
</dbReference>
<dbReference type="SUPFAM" id="SSF160950">
    <property type="entry name" value="YacF-like"/>
    <property type="match status" value="1"/>
</dbReference>
<sequence>MQTQVLFEHPLNEKMRTWLRIEFLIQQLTVNLPIVDHAGALHFFRNVSELLDVFERGEVRTELLKELDRQQRKLQTWIGVPGVDQSRIEALIQQLKAAGSVLISAPRIGQFLREDRLIALVRQRLSIPGGCCSFDLPTLHIWLHLPQAQRDSQVETWIASLNPLTQALTMVLDLIRQSAPFRKQTSLNGFYQDNGGDADLLRLNLSLDSQLYPQISGHKSRFAIRFMPLDSENGQVPERLNFELACC</sequence>
<name>ZAPD_SHIBS</name>
<gene>
    <name evidence="1" type="primary">zapD</name>
    <name type="ordered locus">SBO_0090</name>
</gene>
<reference key="1">
    <citation type="journal article" date="2005" name="Nucleic Acids Res.">
        <title>Genome dynamics and diversity of Shigella species, the etiologic agents of bacillary dysentery.</title>
        <authorList>
            <person name="Yang F."/>
            <person name="Yang J."/>
            <person name="Zhang X."/>
            <person name="Chen L."/>
            <person name="Jiang Y."/>
            <person name="Yan Y."/>
            <person name="Tang X."/>
            <person name="Wang J."/>
            <person name="Xiong Z."/>
            <person name="Dong J."/>
            <person name="Xue Y."/>
            <person name="Zhu Y."/>
            <person name="Xu X."/>
            <person name="Sun L."/>
            <person name="Chen S."/>
            <person name="Nie H."/>
            <person name="Peng J."/>
            <person name="Xu J."/>
            <person name="Wang Y."/>
            <person name="Yuan Z."/>
            <person name="Wen Y."/>
            <person name="Yao Z."/>
            <person name="Shen Y."/>
            <person name="Qiang B."/>
            <person name="Hou Y."/>
            <person name="Yu J."/>
            <person name="Jin Q."/>
        </authorList>
    </citation>
    <scope>NUCLEOTIDE SEQUENCE [LARGE SCALE GENOMIC DNA]</scope>
    <source>
        <strain>Sb227</strain>
    </source>
</reference>
<comment type="function">
    <text evidence="1">Cell division factor that enhances FtsZ-ring assembly. Directly interacts with FtsZ and promotes bundling of FtsZ protofilaments, with a reduction in FtsZ GTPase activity.</text>
</comment>
<comment type="subunit">
    <text evidence="1">Interacts with FtsZ.</text>
</comment>
<comment type="subcellular location">
    <subcellularLocation>
        <location evidence="1">Cytoplasm</location>
    </subcellularLocation>
    <text evidence="1">Localizes to mid-cell in an FtsZ-dependent manner.</text>
</comment>
<comment type="similarity">
    <text evidence="1">Belongs to the ZapD family.</text>
</comment>
<accession>Q326D3</accession>